<gene>
    <name type="primary">SPINK1</name>
    <name type="synonym">PSTI</name>
</gene>
<feature type="chain" id="PRO_0000073026" description="Serine protease inhibitor Kazal-type 1">
    <location>
        <begin position="1"/>
        <end position="55"/>
    </location>
</feature>
<feature type="domain" description="Kazal-like" evidence="2">
    <location>
        <begin position="2"/>
        <end position="55"/>
    </location>
</feature>
<feature type="site" description="Reactive bond for trypsin" evidence="1 2">
    <location>
        <begin position="17"/>
        <end position="18"/>
    </location>
</feature>
<feature type="site" description="Necessary for sperm binding" evidence="1">
    <location>
        <begin position="19"/>
        <end position="20"/>
    </location>
</feature>
<feature type="disulfide bond" evidence="2">
    <location>
        <begin position="8"/>
        <end position="37"/>
    </location>
</feature>
<feature type="disulfide bond" evidence="2">
    <location>
        <begin position="15"/>
        <end position="34"/>
    </location>
</feature>
<feature type="disulfide bond" evidence="2">
    <location>
        <begin position="23"/>
        <end position="55"/>
    </location>
</feature>
<comment type="function">
    <text evidence="1">Serine protease inhibitor which exhibits anti-trypsin activity. In the pancreas, protects against trypsin-catalyzed premature activation of zymogens.</text>
</comment>
<comment type="function">
    <text evidence="1">In the male reproductive tract, binds to sperm heads where it modulates sperm capacitance by inhibiting calcium uptake and nitrogen oxide (NO) production.</text>
</comment>
<comment type="subcellular location">
    <subcellularLocation>
        <location evidence="1">Secreted</location>
    </subcellularLocation>
</comment>
<dbReference type="SMR" id="P81635"/>
<dbReference type="MEROPS" id="I01.011"/>
<dbReference type="eggNOG" id="KOG3649">
    <property type="taxonomic scope" value="Eukaryota"/>
</dbReference>
<dbReference type="InParanoid" id="P81635"/>
<dbReference type="Proteomes" id="UP000002280">
    <property type="component" value="Unplaced"/>
</dbReference>
<dbReference type="GO" id="GO:0005576">
    <property type="term" value="C:extracellular region"/>
    <property type="evidence" value="ECO:0007669"/>
    <property type="project" value="UniProtKB-SubCell"/>
</dbReference>
<dbReference type="GO" id="GO:0004867">
    <property type="term" value="F:serine-type endopeptidase inhibitor activity"/>
    <property type="evidence" value="ECO:0007669"/>
    <property type="project" value="UniProtKB-KW"/>
</dbReference>
<dbReference type="CDD" id="cd01327">
    <property type="entry name" value="KAZAL_PSTI"/>
    <property type="match status" value="1"/>
</dbReference>
<dbReference type="FunFam" id="3.30.60.30:FF:000031">
    <property type="entry name" value="Serine protease inhibitor Kazal-type 2"/>
    <property type="match status" value="1"/>
</dbReference>
<dbReference type="Gene3D" id="3.30.60.30">
    <property type="match status" value="1"/>
</dbReference>
<dbReference type="InterPro" id="IPR002350">
    <property type="entry name" value="Kazal_dom"/>
</dbReference>
<dbReference type="InterPro" id="IPR036058">
    <property type="entry name" value="Kazal_dom_sf"/>
</dbReference>
<dbReference type="InterPro" id="IPR001239">
    <property type="entry name" value="Prot_inh_Kazal-m"/>
</dbReference>
<dbReference type="PANTHER" id="PTHR21312:SF28">
    <property type="entry name" value="OVOINHIBITOR-RELATED"/>
    <property type="match status" value="1"/>
</dbReference>
<dbReference type="PANTHER" id="PTHR21312">
    <property type="entry name" value="SERINE PROTEASE INHIBITOR"/>
    <property type="match status" value="1"/>
</dbReference>
<dbReference type="Pfam" id="PF00050">
    <property type="entry name" value="Kazal_1"/>
    <property type="match status" value="1"/>
</dbReference>
<dbReference type="PRINTS" id="PR00290">
    <property type="entry name" value="KAZALINHBTR"/>
</dbReference>
<dbReference type="SMART" id="SM00280">
    <property type="entry name" value="KAZAL"/>
    <property type="match status" value="1"/>
</dbReference>
<dbReference type="SUPFAM" id="SSF100895">
    <property type="entry name" value="Kazal-type serine protease inhibitors"/>
    <property type="match status" value="1"/>
</dbReference>
<dbReference type="PROSITE" id="PS00282">
    <property type="entry name" value="KAZAL_1"/>
    <property type="match status" value="1"/>
</dbReference>
<dbReference type="PROSITE" id="PS51465">
    <property type="entry name" value="KAZAL_2"/>
    <property type="match status" value="1"/>
</dbReference>
<keyword id="KW-0903">Direct protein sequencing</keyword>
<keyword id="KW-1015">Disulfide bond</keyword>
<keyword id="KW-0646">Protease inhibitor</keyword>
<keyword id="KW-1185">Reference proteome</keyword>
<keyword id="KW-0964">Secreted</keyword>
<keyword id="KW-0722">Serine protease inhibitor</keyword>
<protein>
    <recommendedName>
        <fullName evidence="1">Serine protease inhibitor Kazal-type 1</fullName>
    </recommendedName>
    <alternativeName>
        <fullName evidence="1">Pancreatic secretory trypsin inhibitor</fullName>
    </alternativeName>
</protein>
<evidence type="ECO:0000250" key="1">
    <source>
        <dbReference type="UniProtKB" id="P09036"/>
    </source>
</evidence>
<evidence type="ECO:0000255" key="2">
    <source>
        <dbReference type="PROSITE-ProRule" id="PRU00798"/>
    </source>
</evidence>
<name>ISK1_MONDO</name>
<reference key="1">
    <citation type="thesis" date="1993" institute="Ludwig-Maximilians University / Munich" country="Germany">
        <title>Representation and characterization of pancreatic secretory proteinase inhibitors from various animal species.</title>
        <authorList>
            <person name="Voit J."/>
        </authorList>
    </citation>
    <scope>PROTEIN SEQUENCE</scope>
    <source>
        <tissue>Pancreas</tissue>
    </source>
</reference>
<proteinExistence type="evidence at protein level"/>
<accession>P81635</accession>
<sequence>DQGRDANCNYEFPGCPRNLEPVCGTDGNTYNNECLLCMENKKRDVPIRIQKDGPC</sequence>
<organism>
    <name type="scientific">Monodelphis domestica</name>
    <name type="common">Gray short-tailed opossum</name>
    <dbReference type="NCBI Taxonomy" id="13616"/>
    <lineage>
        <taxon>Eukaryota</taxon>
        <taxon>Metazoa</taxon>
        <taxon>Chordata</taxon>
        <taxon>Craniata</taxon>
        <taxon>Vertebrata</taxon>
        <taxon>Euteleostomi</taxon>
        <taxon>Mammalia</taxon>
        <taxon>Metatheria</taxon>
        <taxon>Didelphimorphia</taxon>
        <taxon>Didelphidae</taxon>
        <taxon>Monodelphis</taxon>
    </lineage>
</organism>